<comment type="function">
    <text evidence="1">Chaperone involved in the maturation of iron-sulfur cluster-containing proteins. Has a low intrinsic ATPase activity which is markedly stimulated by HscB.</text>
</comment>
<comment type="similarity">
    <text evidence="1">Belongs to the heat shock protein 70 family.</text>
</comment>
<feature type="chain" id="PRO_0000078623" description="Chaperone protein HscA homolog">
    <location>
        <begin position="1"/>
        <end position="622"/>
    </location>
</feature>
<keyword id="KW-0067">ATP-binding</keyword>
<keyword id="KW-0143">Chaperone</keyword>
<keyword id="KW-0547">Nucleotide-binding</keyword>
<keyword id="KW-1185">Reference proteome</keyword>
<proteinExistence type="inferred from homology"/>
<protein>
    <recommendedName>
        <fullName evidence="1">Chaperone protein HscA homolog</fullName>
    </recommendedName>
</protein>
<sequence>MALLQISEPGMAPAPHQRRLAVGIDLGTTNSLVAAVRNSIPEALPDDAGRVLLPSVVRYLDKGGRRIGHAAKEEAAIDPRNTIVSVKRFMGRGKAEVEGAANAPYEFVDAPGMVQIRTVDGVKSPVEVSAEILATLRQRAEDTLGDDLVGAVITVPAYFDDAQRQATKDAARLAGLNVLRLLNEPTAAAIAYGLDNGAEGLYAVYDLGGGTFDLSILKLTKGVFEVLAAGGDSALGGDDFDHLLFEHVLAQAGLEAAALAPEDVRLLLDRVRGAKEALSAAPQARVDVKLSTGEKLAQTITRDTFAALVEPLVQRTLGPTRKALRDAQVSAADIKGVVLVGGATRMPVIRDAVAKYFGQPPLVNLDPDQVVALGAAIQADLLAGNRSGGDDWLLLDVIPLSLGVETMGGLVEKIIPRNSTIPVARAQEFTTFKDGQTAMAIHVVQGERELVSDCRSLARFELRGIPPMTAGAARIRVTYQVDADGLLSVFAREQHSGVEASVVVKPSYGLGDDDIARMLEDSFKTAEVDMRARALREAQVEAQRLVEATEAALVADGDLLDASERATVDALVASLRALAPGDDADAIDTATKALAEGTDEFAARRMDKSIKRALAGRKLDEI</sequence>
<evidence type="ECO:0000255" key="1">
    <source>
        <dbReference type="HAMAP-Rule" id="MF_00679"/>
    </source>
</evidence>
<name>HSCA_BURPS</name>
<dbReference type="EMBL" id="BX571965">
    <property type="protein sequence ID" value="CAH36288.1"/>
    <property type="molecule type" value="Genomic_DNA"/>
</dbReference>
<dbReference type="RefSeq" id="WP_009938156.1">
    <property type="nucleotide sequence ID" value="NZ_CP009538.1"/>
</dbReference>
<dbReference type="RefSeq" id="YP_108881.1">
    <property type="nucleotide sequence ID" value="NC_006350.1"/>
</dbReference>
<dbReference type="SMR" id="Q63SN5"/>
<dbReference type="STRING" id="272560.BPSL2285"/>
<dbReference type="KEGG" id="bps:BPSL2285"/>
<dbReference type="PATRIC" id="fig|272560.51.peg.3144"/>
<dbReference type="eggNOG" id="COG0443">
    <property type="taxonomic scope" value="Bacteria"/>
</dbReference>
<dbReference type="Proteomes" id="UP000000605">
    <property type="component" value="Chromosome 1"/>
</dbReference>
<dbReference type="GO" id="GO:0005524">
    <property type="term" value="F:ATP binding"/>
    <property type="evidence" value="ECO:0007669"/>
    <property type="project" value="UniProtKB-KW"/>
</dbReference>
<dbReference type="GO" id="GO:0016887">
    <property type="term" value="F:ATP hydrolysis activity"/>
    <property type="evidence" value="ECO:0007669"/>
    <property type="project" value="UniProtKB-UniRule"/>
</dbReference>
<dbReference type="GO" id="GO:0140662">
    <property type="term" value="F:ATP-dependent protein folding chaperone"/>
    <property type="evidence" value="ECO:0007669"/>
    <property type="project" value="InterPro"/>
</dbReference>
<dbReference type="GO" id="GO:0051082">
    <property type="term" value="F:unfolded protein binding"/>
    <property type="evidence" value="ECO:0007669"/>
    <property type="project" value="InterPro"/>
</dbReference>
<dbReference type="GO" id="GO:0016226">
    <property type="term" value="P:iron-sulfur cluster assembly"/>
    <property type="evidence" value="ECO:0007669"/>
    <property type="project" value="InterPro"/>
</dbReference>
<dbReference type="FunFam" id="3.30.420.40:FF:000046">
    <property type="entry name" value="Chaperone protein HscA"/>
    <property type="match status" value="1"/>
</dbReference>
<dbReference type="FunFam" id="2.60.34.10:FF:000005">
    <property type="entry name" value="Chaperone protein HscA homolog"/>
    <property type="match status" value="1"/>
</dbReference>
<dbReference type="Gene3D" id="1.20.1270.10">
    <property type="match status" value="1"/>
</dbReference>
<dbReference type="Gene3D" id="3.30.420.40">
    <property type="match status" value="2"/>
</dbReference>
<dbReference type="Gene3D" id="3.90.640.10">
    <property type="entry name" value="Actin, Chain A, domain 4"/>
    <property type="match status" value="1"/>
</dbReference>
<dbReference type="Gene3D" id="2.60.34.10">
    <property type="entry name" value="Substrate Binding Domain Of DNAk, Chain A, domain 1"/>
    <property type="match status" value="1"/>
</dbReference>
<dbReference type="HAMAP" id="MF_00679">
    <property type="entry name" value="HscA"/>
    <property type="match status" value="1"/>
</dbReference>
<dbReference type="InterPro" id="IPR043129">
    <property type="entry name" value="ATPase_NBD"/>
</dbReference>
<dbReference type="InterPro" id="IPR018181">
    <property type="entry name" value="Heat_shock_70_CS"/>
</dbReference>
<dbReference type="InterPro" id="IPR029048">
    <property type="entry name" value="HSP70_C_sf"/>
</dbReference>
<dbReference type="InterPro" id="IPR029047">
    <property type="entry name" value="HSP70_peptide-bd_sf"/>
</dbReference>
<dbReference type="InterPro" id="IPR013126">
    <property type="entry name" value="Hsp_70_fam"/>
</dbReference>
<dbReference type="InterPro" id="IPR010236">
    <property type="entry name" value="ISC_FeS_clus_asmbl_HscA"/>
</dbReference>
<dbReference type="NCBIfam" id="TIGR01991">
    <property type="entry name" value="HscA"/>
    <property type="match status" value="1"/>
</dbReference>
<dbReference type="NCBIfam" id="NF003520">
    <property type="entry name" value="PRK05183.1"/>
    <property type="match status" value="1"/>
</dbReference>
<dbReference type="PANTHER" id="PTHR19375">
    <property type="entry name" value="HEAT SHOCK PROTEIN 70KDA"/>
    <property type="match status" value="1"/>
</dbReference>
<dbReference type="Pfam" id="PF00012">
    <property type="entry name" value="HSP70"/>
    <property type="match status" value="1"/>
</dbReference>
<dbReference type="PRINTS" id="PR00301">
    <property type="entry name" value="HEATSHOCK70"/>
</dbReference>
<dbReference type="SUPFAM" id="SSF53067">
    <property type="entry name" value="Actin-like ATPase domain"/>
    <property type="match status" value="2"/>
</dbReference>
<dbReference type="SUPFAM" id="SSF100934">
    <property type="entry name" value="Heat shock protein 70kD (HSP70), C-terminal subdomain"/>
    <property type="match status" value="1"/>
</dbReference>
<dbReference type="SUPFAM" id="SSF100920">
    <property type="entry name" value="Heat shock protein 70kD (HSP70), peptide-binding domain"/>
    <property type="match status" value="1"/>
</dbReference>
<dbReference type="PROSITE" id="PS00297">
    <property type="entry name" value="HSP70_1"/>
    <property type="match status" value="1"/>
</dbReference>
<dbReference type="PROSITE" id="PS00329">
    <property type="entry name" value="HSP70_2"/>
    <property type="match status" value="1"/>
</dbReference>
<dbReference type="PROSITE" id="PS01036">
    <property type="entry name" value="HSP70_3"/>
    <property type="match status" value="1"/>
</dbReference>
<accession>Q63SN5</accession>
<organism>
    <name type="scientific">Burkholderia pseudomallei (strain K96243)</name>
    <dbReference type="NCBI Taxonomy" id="272560"/>
    <lineage>
        <taxon>Bacteria</taxon>
        <taxon>Pseudomonadati</taxon>
        <taxon>Pseudomonadota</taxon>
        <taxon>Betaproteobacteria</taxon>
        <taxon>Burkholderiales</taxon>
        <taxon>Burkholderiaceae</taxon>
        <taxon>Burkholderia</taxon>
        <taxon>pseudomallei group</taxon>
    </lineage>
</organism>
<reference key="1">
    <citation type="journal article" date="2004" name="Proc. Natl. Acad. Sci. U.S.A.">
        <title>Genomic plasticity of the causative agent of melioidosis, Burkholderia pseudomallei.</title>
        <authorList>
            <person name="Holden M.T.G."/>
            <person name="Titball R.W."/>
            <person name="Peacock S.J."/>
            <person name="Cerdeno-Tarraga A.-M."/>
            <person name="Atkins T."/>
            <person name="Crossman L.C."/>
            <person name="Pitt T."/>
            <person name="Churcher C."/>
            <person name="Mungall K.L."/>
            <person name="Bentley S.D."/>
            <person name="Sebaihia M."/>
            <person name="Thomson N.R."/>
            <person name="Bason N."/>
            <person name="Beacham I.R."/>
            <person name="Brooks K."/>
            <person name="Brown K.A."/>
            <person name="Brown N.F."/>
            <person name="Challis G.L."/>
            <person name="Cherevach I."/>
            <person name="Chillingworth T."/>
            <person name="Cronin A."/>
            <person name="Crossett B."/>
            <person name="Davis P."/>
            <person name="DeShazer D."/>
            <person name="Feltwell T."/>
            <person name="Fraser A."/>
            <person name="Hance Z."/>
            <person name="Hauser H."/>
            <person name="Holroyd S."/>
            <person name="Jagels K."/>
            <person name="Keith K.E."/>
            <person name="Maddison M."/>
            <person name="Moule S."/>
            <person name="Price C."/>
            <person name="Quail M.A."/>
            <person name="Rabbinowitsch E."/>
            <person name="Rutherford K."/>
            <person name="Sanders M."/>
            <person name="Simmonds M."/>
            <person name="Songsivilai S."/>
            <person name="Stevens K."/>
            <person name="Tumapa S."/>
            <person name="Vesaratchavest M."/>
            <person name="Whitehead S."/>
            <person name="Yeats C."/>
            <person name="Barrell B.G."/>
            <person name="Oyston P.C.F."/>
            <person name="Parkhill J."/>
        </authorList>
    </citation>
    <scope>NUCLEOTIDE SEQUENCE [LARGE SCALE GENOMIC DNA]</scope>
    <source>
        <strain>K96243</strain>
    </source>
</reference>
<gene>
    <name evidence="1" type="primary">hscA</name>
    <name type="ordered locus">BPSL2285</name>
</gene>